<feature type="chain" id="PRO_0000300556" description="p-hydroxybenzoic acid efflux pump subunit AaeA">
    <location>
        <begin position="1"/>
        <end position="310"/>
    </location>
</feature>
<feature type="transmembrane region" description="Helical" evidence="1">
    <location>
        <begin position="12"/>
        <end position="32"/>
    </location>
</feature>
<reference key="1">
    <citation type="journal article" date="2006" name="BMC Genomics">
        <title>Complete genome sequence of Shigella flexneri 5b and comparison with Shigella flexneri 2a.</title>
        <authorList>
            <person name="Nie H."/>
            <person name="Yang F."/>
            <person name="Zhang X."/>
            <person name="Yang J."/>
            <person name="Chen L."/>
            <person name="Wang J."/>
            <person name="Xiong Z."/>
            <person name="Peng J."/>
            <person name="Sun L."/>
            <person name="Dong J."/>
            <person name="Xue Y."/>
            <person name="Xu X."/>
            <person name="Chen S."/>
            <person name="Yao Z."/>
            <person name="Shen Y."/>
            <person name="Jin Q."/>
        </authorList>
    </citation>
    <scope>NUCLEOTIDE SEQUENCE [LARGE SCALE GENOMIC DNA]</scope>
    <source>
        <strain>8401</strain>
    </source>
</reference>
<protein>
    <recommendedName>
        <fullName evidence="1">p-hydroxybenzoic acid efflux pump subunit AaeA</fullName>
        <shortName evidence="1">pHBA efflux pump protein A</shortName>
    </recommendedName>
</protein>
<accession>Q0T047</accession>
<dbReference type="EMBL" id="CP000266">
    <property type="protein sequence ID" value="ABF05318.1"/>
    <property type="molecule type" value="Genomic_DNA"/>
</dbReference>
<dbReference type="RefSeq" id="WP_000854021.1">
    <property type="nucleotide sequence ID" value="NC_008258.1"/>
</dbReference>
<dbReference type="SMR" id="Q0T047"/>
<dbReference type="GeneID" id="75206091"/>
<dbReference type="KEGG" id="sfv:SFV_3268"/>
<dbReference type="HOGENOM" id="CLU_018816_15_2_6"/>
<dbReference type="Proteomes" id="UP000000659">
    <property type="component" value="Chromosome"/>
</dbReference>
<dbReference type="GO" id="GO:0005886">
    <property type="term" value="C:plasma membrane"/>
    <property type="evidence" value="ECO:0007669"/>
    <property type="project" value="UniProtKB-SubCell"/>
</dbReference>
<dbReference type="GO" id="GO:0022857">
    <property type="term" value="F:transmembrane transporter activity"/>
    <property type="evidence" value="ECO:0007669"/>
    <property type="project" value="UniProtKB-UniRule"/>
</dbReference>
<dbReference type="FunFam" id="2.40.30.170:FF:000002">
    <property type="entry name" value="p-hydroxybenzoic acid efflux pump subunit AaeA"/>
    <property type="match status" value="1"/>
</dbReference>
<dbReference type="FunFam" id="2.40.50.100:FF:000018">
    <property type="entry name" value="p-hydroxybenzoic acid efflux pump subunit AaeA"/>
    <property type="match status" value="1"/>
</dbReference>
<dbReference type="Gene3D" id="2.40.30.170">
    <property type="match status" value="1"/>
</dbReference>
<dbReference type="Gene3D" id="2.40.50.100">
    <property type="match status" value="1"/>
</dbReference>
<dbReference type="HAMAP" id="MF_01544">
    <property type="entry name" value="AaeA"/>
    <property type="match status" value="1"/>
</dbReference>
<dbReference type="InterPro" id="IPR043602">
    <property type="entry name" value="CusB-like_dom_1"/>
</dbReference>
<dbReference type="InterPro" id="IPR032317">
    <property type="entry name" value="CusB_D23"/>
</dbReference>
<dbReference type="InterPro" id="IPR050393">
    <property type="entry name" value="MFP_Efflux_Pump"/>
</dbReference>
<dbReference type="InterPro" id="IPR022871">
    <property type="entry name" value="PHBA_efflux_pump_AaeA"/>
</dbReference>
<dbReference type="InterPro" id="IPR006143">
    <property type="entry name" value="RND_pump_MFP"/>
</dbReference>
<dbReference type="NCBIfam" id="NF007850">
    <property type="entry name" value="PRK10559.1"/>
    <property type="match status" value="1"/>
</dbReference>
<dbReference type="NCBIfam" id="TIGR01730">
    <property type="entry name" value="RND_mfp"/>
    <property type="match status" value="1"/>
</dbReference>
<dbReference type="PANTHER" id="PTHR30367:SF12">
    <property type="entry name" value="P-HYDROXYBENZOIC ACID EFFLUX PUMP SUBUNIT AAEA"/>
    <property type="match status" value="1"/>
</dbReference>
<dbReference type="PANTHER" id="PTHR30367">
    <property type="entry name" value="P-HYDROXYBENZOIC ACID EFFLUX PUMP SUBUNIT AAEA-RELATED"/>
    <property type="match status" value="1"/>
</dbReference>
<dbReference type="Pfam" id="PF00529">
    <property type="entry name" value="CusB_dom_1"/>
    <property type="match status" value="1"/>
</dbReference>
<dbReference type="Pfam" id="PF16576">
    <property type="entry name" value="HlyD_D23"/>
    <property type="match status" value="1"/>
</dbReference>
<dbReference type="SUPFAM" id="SSF111369">
    <property type="entry name" value="HlyD-like secretion proteins"/>
    <property type="match status" value="1"/>
</dbReference>
<evidence type="ECO:0000255" key="1">
    <source>
        <dbReference type="HAMAP-Rule" id="MF_01544"/>
    </source>
</evidence>
<gene>
    <name evidence="1" type="primary">aaeA</name>
    <name type="ordered locus">SFV_3268</name>
</gene>
<sequence>MKTLIRKFSRTAITVVLVILAFIAIFNAWVYYTESPWTRDARFSADVVAIAPDVSGLITQVNVHDNQLVKKGQILFTIDQPRYQKALEEAQADVAYYQVLAQEKRQEAGRRNRLGVQAMSREEIDQANNVLQTVLHQLAKAQATRDLAKLDLERTVIRAPADGWVTNLNVYTGEFITRGSTAVALVKQNSFYVLAYMEETKLEGVRPGYRAEITPLGSNKVLKGTVDSVAAGVTNASSTRDDKGMATIDSNLEWVRLAQRVPVRIRLDNQQENIWPAGTTATVVVTGKQDRDESQDSFFRKMAHRLREFG</sequence>
<organism>
    <name type="scientific">Shigella flexneri serotype 5b (strain 8401)</name>
    <dbReference type="NCBI Taxonomy" id="373384"/>
    <lineage>
        <taxon>Bacteria</taxon>
        <taxon>Pseudomonadati</taxon>
        <taxon>Pseudomonadota</taxon>
        <taxon>Gammaproteobacteria</taxon>
        <taxon>Enterobacterales</taxon>
        <taxon>Enterobacteriaceae</taxon>
        <taxon>Shigella</taxon>
    </lineage>
</organism>
<keyword id="KW-0997">Cell inner membrane</keyword>
<keyword id="KW-1003">Cell membrane</keyword>
<keyword id="KW-0472">Membrane</keyword>
<keyword id="KW-0812">Transmembrane</keyword>
<keyword id="KW-1133">Transmembrane helix</keyword>
<keyword id="KW-0813">Transport</keyword>
<name>AAEA_SHIF8</name>
<proteinExistence type="inferred from homology"/>
<comment type="function">
    <text evidence="1">Forms an efflux pump with AaeB.</text>
</comment>
<comment type="subcellular location">
    <subcellularLocation>
        <location evidence="1">Cell inner membrane</location>
        <topology evidence="1">Single-pass membrane protein</topology>
    </subcellularLocation>
</comment>
<comment type="similarity">
    <text evidence="1">Belongs to the membrane fusion protein (MFP) (TC 8.A.1) family.</text>
</comment>